<comment type="function">
    <text evidence="1">Necessary for normal cell division and for the maintenance of normal septation.</text>
</comment>
<comment type="cofactor">
    <cofactor evidence="1">
        <name>Mg(2+)</name>
        <dbReference type="ChEBI" id="CHEBI:18420"/>
    </cofactor>
</comment>
<comment type="similarity">
    <text evidence="1">Belongs to the TRAFAC class TrmE-Era-EngA-EngB-Septin-like GTPase superfamily. EngB GTPase family.</text>
</comment>
<comment type="sequence caution" evidence="2">
    <conflict type="erroneous initiation">
        <sequence resource="EMBL-CDS" id="ABB68328"/>
    </conflict>
</comment>
<gene>
    <name evidence="1" type="primary">engB</name>
    <name type="ordered locus">SBO_3877</name>
</gene>
<name>ENGB_SHIBS</name>
<evidence type="ECO:0000255" key="1">
    <source>
        <dbReference type="HAMAP-Rule" id="MF_00321"/>
    </source>
</evidence>
<evidence type="ECO:0000305" key="2"/>
<reference key="1">
    <citation type="journal article" date="2005" name="Nucleic Acids Res.">
        <title>Genome dynamics and diversity of Shigella species, the etiologic agents of bacillary dysentery.</title>
        <authorList>
            <person name="Yang F."/>
            <person name="Yang J."/>
            <person name="Zhang X."/>
            <person name="Chen L."/>
            <person name="Jiang Y."/>
            <person name="Yan Y."/>
            <person name="Tang X."/>
            <person name="Wang J."/>
            <person name="Xiong Z."/>
            <person name="Dong J."/>
            <person name="Xue Y."/>
            <person name="Zhu Y."/>
            <person name="Xu X."/>
            <person name="Sun L."/>
            <person name="Chen S."/>
            <person name="Nie H."/>
            <person name="Peng J."/>
            <person name="Xu J."/>
            <person name="Wang Y."/>
            <person name="Yuan Z."/>
            <person name="Wen Y."/>
            <person name="Yao Z."/>
            <person name="Shen Y."/>
            <person name="Qiang B."/>
            <person name="Hou Y."/>
            <person name="Yu J."/>
            <person name="Jin Q."/>
        </authorList>
    </citation>
    <scope>NUCLEOTIDE SEQUENCE [LARGE SCALE GENOMIC DNA]</scope>
    <source>
        <strain>Sb227</strain>
    </source>
</reference>
<dbReference type="EMBL" id="CP000036">
    <property type="protein sequence ID" value="ABB68328.1"/>
    <property type="status" value="ALT_INIT"/>
    <property type="molecule type" value="Genomic_DNA"/>
</dbReference>
<dbReference type="SMR" id="Q31UD0"/>
<dbReference type="KEGG" id="sbo:SBO_3877"/>
<dbReference type="HOGENOM" id="CLU_033732_1_0_6"/>
<dbReference type="Proteomes" id="UP000007067">
    <property type="component" value="Chromosome"/>
</dbReference>
<dbReference type="GO" id="GO:0005829">
    <property type="term" value="C:cytosol"/>
    <property type="evidence" value="ECO:0007669"/>
    <property type="project" value="TreeGrafter"/>
</dbReference>
<dbReference type="GO" id="GO:0005525">
    <property type="term" value="F:GTP binding"/>
    <property type="evidence" value="ECO:0007669"/>
    <property type="project" value="UniProtKB-UniRule"/>
</dbReference>
<dbReference type="GO" id="GO:0046872">
    <property type="term" value="F:metal ion binding"/>
    <property type="evidence" value="ECO:0007669"/>
    <property type="project" value="UniProtKB-KW"/>
</dbReference>
<dbReference type="GO" id="GO:0000917">
    <property type="term" value="P:division septum assembly"/>
    <property type="evidence" value="ECO:0007669"/>
    <property type="project" value="UniProtKB-KW"/>
</dbReference>
<dbReference type="CDD" id="cd01876">
    <property type="entry name" value="YihA_EngB"/>
    <property type="match status" value="1"/>
</dbReference>
<dbReference type="FunFam" id="3.40.50.300:FF:000098">
    <property type="entry name" value="Probable GTP-binding protein EngB"/>
    <property type="match status" value="1"/>
</dbReference>
<dbReference type="Gene3D" id="3.40.50.300">
    <property type="entry name" value="P-loop containing nucleotide triphosphate hydrolases"/>
    <property type="match status" value="1"/>
</dbReference>
<dbReference type="HAMAP" id="MF_00321">
    <property type="entry name" value="GTPase_EngB"/>
    <property type="match status" value="1"/>
</dbReference>
<dbReference type="InterPro" id="IPR030393">
    <property type="entry name" value="G_ENGB_dom"/>
</dbReference>
<dbReference type="InterPro" id="IPR006073">
    <property type="entry name" value="GTP-bd"/>
</dbReference>
<dbReference type="InterPro" id="IPR019987">
    <property type="entry name" value="GTP-bd_ribosome_bio_YsxC"/>
</dbReference>
<dbReference type="InterPro" id="IPR027417">
    <property type="entry name" value="P-loop_NTPase"/>
</dbReference>
<dbReference type="NCBIfam" id="TIGR03598">
    <property type="entry name" value="GTPase_YsxC"/>
    <property type="match status" value="1"/>
</dbReference>
<dbReference type="PANTHER" id="PTHR11649:SF13">
    <property type="entry name" value="ENGB-TYPE G DOMAIN-CONTAINING PROTEIN"/>
    <property type="match status" value="1"/>
</dbReference>
<dbReference type="PANTHER" id="PTHR11649">
    <property type="entry name" value="MSS1/TRME-RELATED GTP-BINDING PROTEIN"/>
    <property type="match status" value="1"/>
</dbReference>
<dbReference type="Pfam" id="PF01926">
    <property type="entry name" value="MMR_HSR1"/>
    <property type="match status" value="1"/>
</dbReference>
<dbReference type="SUPFAM" id="SSF52540">
    <property type="entry name" value="P-loop containing nucleoside triphosphate hydrolases"/>
    <property type="match status" value="1"/>
</dbReference>
<dbReference type="PROSITE" id="PS51706">
    <property type="entry name" value="G_ENGB"/>
    <property type="match status" value="1"/>
</dbReference>
<sequence>MTNLNYQQTHFVMSAPDIRHLPSDTGIEVAFAGRSNAGKSSALNTLTNQKSLARTSKTPGRTQLINLFEVADGKRLVDLPGYGYAEVPEEMKRKWQRALGEYLEKRHSLQGLVVLMDIRHPLKDLDQQMIEWAVDSNIAVLVLLTKADKLASGARKAQLNMVREAVLAFNGDVQVETFSSLKKQGVDKLRQKLDTWFSEMQPVEETQDGE</sequence>
<keyword id="KW-0131">Cell cycle</keyword>
<keyword id="KW-0132">Cell division</keyword>
<keyword id="KW-0342">GTP-binding</keyword>
<keyword id="KW-0460">Magnesium</keyword>
<keyword id="KW-0479">Metal-binding</keyword>
<keyword id="KW-0547">Nucleotide-binding</keyword>
<keyword id="KW-0717">Septation</keyword>
<accession>Q31UD0</accession>
<organism>
    <name type="scientific">Shigella boydii serotype 4 (strain Sb227)</name>
    <dbReference type="NCBI Taxonomy" id="300268"/>
    <lineage>
        <taxon>Bacteria</taxon>
        <taxon>Pseudomonadati</taxon>
        <taxon>Pseudomonadota</taxon>
        <taxon>Gammaproteobacteria</taxon>
        <taxon>Enterobacterales</taxon>
        <taxon>Enterobacteriaceae</taxon>
        <taxon>Shigella</taxon>
    </lineage>
</organism>
<protein>
    <recommendedName>
        <fullName evidence="1">Probable GTP-binding protein EngB</fullName>
    </recommendedName>
</protein>
<feature type="chain" id="PRO_0000266947" description="Probable GTP-binding protein EngB">
    <location>
        <begin position="1"/>
        <end position="210"/>
    </location>
</feature>
<feature type="domain" description="EngB-type G" evidence="1">
    <location>
        <begin position="25"/>
        <end position="199"/>
    </location>
</feature>
<feature type="binding site" evidence="1">
    <location>
        <begin position="33"/>
        <end position="40"/>
    </location>
    <ligand>
        <name>GTP</name>
        <dbReference type="ChEBI" id="CHEBI:37565"/>
    </ligand>
</feature>
<feature type="binding site" evidence="1">
    <location>
        <position position="40"/>
    </location>
    <ligand>
        <name>Mg(2+)</name>
        <dbReference type="ChEBI" id="CHEBI:18420"/>
    </ligand>
</feature>
<feature type="binding site" evidence="1">
    <location>
        <begin position="60"/>
        <end position="64"/>
    </location>
    <ligand>
        <name>GTP</name>
        <dbReference type="ChEBI" id="CHEBI:37565"/>
    </ligand>
</feature>
<feature type="binding site" evidence="1">
    <location>
        <position position="62"/>
    </location>
    <ligand>
        <name>Mg(2+)</name>
        <dbReference type="ChEBI" id="CHEBI:18420"/>
    </ligand>
</feature>
<feature type="binding site" evidence="1">
    <location>
        <begin position="78"/>
        <end position="81"/>
    </location>
    <ligand>
        <name>GTP</name>
        <dbReference type="ChEBI" id="CHEBI:37565"/>
    </ligand>
</feature>
<feature type="binding site" evidence="1">
    <location>
        <begin position="145"/>
        <end position="148"/>
    </location>
    <ligand>
        <name>GTP</name>
        <dbReference type="ChEBI" id="CHEBI:37565"/>
    </ligand>
</feature>
<feature type="binding site" evidence="1">
    <location>
        <begin position="178"/>
        <end position="180"/>
    </location>
    <ligand>
        <name>GTP</name>
        <dbReference type="ChEBI" id="CHEBI:37565"/>
    </ligand>
</feature>
<proteinExistence type="inferred from homology"/>